<feature type="chain" id="PRO_1000132864" description="Large ribosomal subunit protein uL11">
    <location>
        <begin position="1"/>
        <end position="141"/>
    </location>
</feature>
<sequence>MAKKVIKMVKLQIPAGKANPAPPVGPALGQAGVNIMGFCKEFNARTADQAGLIIPVEITVFEDRSFTFITKTPPAAVLLKKVAGIESGSGEPNRNKVATVKRDKVREIAETKMPDLNAASVEAAMRMVEGTARSMGIVIED</sequence>
<reference key="1">
    <citation type="submission" date="2008-10" db="EMBL/GenBank/DDBJ databases">
        <title>Genome sequence of Bacillus cereus AH187.</title>
        <authorList>
            <person name="Dodson R.J."/>
            <person name="Durkin A.S."/>
            <person name="Rosovitz M.J."/>
            <person name="Rasko D.A."/>
            <person name="Kolsto A.B."/>
            <person name="Okstad O.A."/>
            <person name="Ravel J."/>
            <person name="Sutton G."/>
        </authorList>
    </citation>
    <scope>NUCLEOTIDE SEQUENCE [LARGE SCALE GENOMIC DNA]</scope>
    <source>
        <strain>AH187</strain>
    </source>
</reference>
<keyword id="KW-0488">Methylation</keyword>
<keyword id="KW-0687">Ribonucleoprotein</keyword>
<keyword id="KW-0689">Ribosomal protein</keyword>
<keyword id="KW-0694">RNA-binding</keyword>
<keyword id="KW-0699">rRNA-binding</keyword>
<organism>
    <name type="scientific">Bacillus cereus (strain AH187)</name>
    <dbReference type="NCBI Taxonomy" id="405534"/>
    <lineage>
        <taxon>Bacteria</taxon>
        <taxon>Bacillati</taxon>
        <taxon>Bacillota</taxon>
        <taxon>Bacilli</taxon>
        <taxon>Bacillales</taxon>
        <taxon>Bacillaceae</taxon>
        <taxon>Bacillus</taxon>
        <taxon>Bacillus cereus group</taxon>
    </lineage>
</organism>
<accession>B7HQT1</accession>
<comment type="function">
    <text evidence="1">Forms part of the ribosomal stalk which helps the ribosome interact with GTP-bound translation factors.</text>
</comment>
<comment type="subunit">
    <text evidence="1">Part of the ribosomal stalk of the 50S ribosomal subunit. Interacts with L10 and the large rRNA to form the base of the stalk. L10 forms an elongated spine to which L12 dimers bind in a sequential fashion forming a multimeric L10(L12)X complex.</text>
</comment>
<comment type="PTM">
    <text evidence="1">One or more lysine residues are methylated.</text>
</comment>
<comment type="similarity">
    <text evidence="1">Belongs to the universal ribosomal protein uL11 family.</text>
</comment>
<dbReference type="EMBL" id="CP001177">
    <property type="protein sequence ID" value="ACJ80147.1"/>
    <property type="molecule type" value="Genomic_DNA"/>
</dbReference>
<dbReference type="SMR" id="B7HQT1"/>
<dbReference type="KEGG" id="bcr:BCAH187_A0127"/>
<dbReference type="HOGENOM" id="CLU_074237_2_1_9"/>
<dbReference type="Proteomes" id="UP000002214">
    <property type="component" value="Chromosome"/>
</dbReference>
<dbReference type="GO" id="GO:0022625">
    <property type="term" value="C:cytosolic large ribosomal subunit"/>
    <property type="evidence" value="ECO:0007669"/>
    <property type="project" value="TreeGrafter"/>
</dbReference>
<dbReference type="GO" id="GO:0070180">
    <property type="term" value="F:large ribosomal subunit rRNA binding"/>
    <property type="evidence" value="ECO:0007669"/>
    <property type="project" value="UniProtKB-UniRule"/>
</dbReference>
<dbReference type="GO" id="GO:0003735">
    <property type="term" value="F:structural constituent of ribosome"/>
    <property type="evidence" value="ECO:0007669"/>
    <property type="project" value="InterPro"/>
</dbReference>
<dbReference type="GO" id="GO:0006412">
    <property type="term" value="P:translation"/>
    <property type="evidence" value="ECO:0007669"/>
    <property type="project" value="UniProtKB-UniRule"/>
</dbReference>
<dbReference type="CDD" id="cd00349">
    <property type="entry name" value="Ribosomal_L11"/>
    <property type="match status" value="1"/>
</dbReference>
<dbReference type="FunFam" id="1.10.10.250:FF:000001">
    <property type="entry name" value="50S ribosomal protein L11"/>
    <property type="match status" value="1"/>
</dbReference>
<dbReference type="FunFam" id="3.30.1550.10:FF:000001">
    <property type="entry name" value="50S ribosomal protein L11"/>
    <property type="match status" value="1"/>
</dbReference>
<dbReference type="Gene3D" id="1.10.10.250">
    <property type="entry name" value="Ribosomal protein L11, C-terminal domain"/>
    <property type="match status" value="1"/>
</dbReference>
<dbReference type="Gene3D" id="3.30.1550.10">
    <property type="entry name" value="Ribosomal protein L11/L12, N-terminal domain"/>
    <property type="match status" value="1"/>
</dbReference>
<dbReference type="HAMAP" id="MF_00736">
    <property type="entry name" value="Ribosomal_uL11"/>
    <property type="match status" value="1"/>
</dbReference>
<dbReference type="InterPro" id="IPR000911">
    <property type="entry name" value="Ribosomal_uL11"/>
</dbReference>
<dbReference type="InterPro" id="IPR006519">
    <property type="entry name" value="Ribosomal_uL11_bac-typ"/>
</dbReference>
<dbReference type="InterPro" id="IPR020783">
    <property type="entry name" value="Ribosomal_uL11_C"/>
</dbReference>
<dbReference type="InterPro" id="IPR036769">
    <property type="entry name" value="Ribosomal_uL11_C_sf"/>
</dbReference>
<dbReference type="InterPro" id="IPR020785">
    <property type="entry name" value="Ribosomal_uL11_CS"/>
</dbReference>
<dbReference type="InterPro" id="IPR020784">
    <property type="entry name" value="Ribosomal_uL11_N"/>
</dbReference>
<dbReference type="InterPro" id="IPR036796">
    <property type="entry name" value="Ribosomal_uL11_N_sf"/>
</dbReference>
<dbReference type="NCBIfam" id="TIGR01632">
    <property type="entry name" value="L11_bact"/>
    <property type="match status" value="1"/>
</dbReference>
<dbReference type="PANTHER" id="PTHR11661">
    <property type="entry name" value="60S RIBOSOMAL PROTEIN L12"/>
    <property type="match status" value="1"/>
</dbReference>
<dbReference type="PANTHER" id="PTHR11661:SF1">
    <property type="entry name" value="LARGE RIBOSOMAL SUBUNIT PROTEIN UL11M"/>
    <property type="match status" value="1"/>
</dbReference>
<dbReference type="Pfam" id="PF00298">
    <property type="entry name" value="Ribosomal_L11"/>
    <property type="match status" value="1"/>
</dbReference>
<dbReference type="Pfam" id="PF03946">
    <property type="entry name" value="Ribosomal_L11_N"/>
    <property type="match status" value="1"/>
</dbReference>
<dbReference type="SMART" id="SM00649">
    <property type="entry name" value="RL11"/>
    <property type="match status" value="1"/>
</dbReference>
<dbReference type="SUPFAM" id="SSF54747">
    <property type="entry name" value="Ribosomal L11/L12e N-terminal domain"/>
    <property type="match status" value="1"/>
</dbReference>
<dbReference type="SUPFAM" id="SSF46906">
    <property type="entry name" value="Ribosomal protein L11, C-terminal domain"/>
    <property type="match status" value="1"/>
</dbReference>
<dbReference type="PROSITE" id="PS00359">
    <property type="entry name" value="RIBOSOMAL_L11"/>
    <property type="match status" value="1"/>
</dbReference>
<proteinExistence type="inferred from homology"/>
<gene>
    <name evidence="1" type="primary">rplK</name>
    <name type="ordered locus">BCAH187_A0127</name>
</gene>
<protein>
    <recommendedName>
        <fullName evidence="1">Large ribosomal subunit protein uL11</fullName>
    </recommendedName>
    <alternativeName>
        <fullName evidence="2">50S ribosomal protein L11</fullName>
    </alternativeName>
</protein>
<name>RL11_BACC7</name>
<evidence type="ECO:0000255" key="1">
    <source>
        <dbReference type="HAMAP-Rule" id="MF_00736"/>
    </source>
</evidence>
<evidence type="ECO:0000305" key="2"/>